<dbReference type="EC" id="4.2.1.59" evidence="1"/>
<dbReference type="EMBL" id="CP000447">
    <property type="protein sequence ID" value="ABI71134.1"/>
    <property type="molecule type" value="Genomic_DNA"/>
</dbReference>
<dbReference type="RefSeq" id="WP_011636755.1">
    <property type="nucleotide sequence ID" value="NC_008345.1"/>
</dbReference>
<dbReference type="SMR" id="Q085D1"/>
<dbReference type="STRING" id="318167.Sfri_1281"/>
<dbReference type="KEGG" id="sfr:Sfri_1281"/>
<dbReference type="eggNOG" id="COG0764">
    <property type="taxonomic scope" value="Bacteria"/>
</dbReference>
<dbReference type="HOGENOM" id="CLU_078912_1_0_6"/>
<dbReference type="OrthoDB" id="9772788at2"/>
<dbReference type="Proteomes" id="UP000000684">
    <property type="component" value="Chromosome"/>
</dbReference>
<dbReference type="GO" id="GO:0005737">
    <property type="term" value="C:cytoplasm"/>
    <property type="evidence" value="ECO:0007669"/>
    <property type="project" value="UniProtKB-SubCell"/>
</dbReference>
<dbReference type="GO" id="GO:0016020">
    <property type="term" value="C:membrane"/>
    <property type="evidence" value="ECO:0007669"/>
    <property type="project" value="GOC"/>
</dbReference>
<dbReference type="GO" id="GO:0019171">
    <property type="term" value="F:(3R)-hydroxyacyl-[acyl-carrier-protein] dehydratase activity"/>
    <property type="evidence" value="ECO:0007669"/>
    <property type="project" value="UniProtKB-EC"/>
</dbReference>
<dbReference type="GO" id="GO:0006633">
    <property type="term" value="P:fatty acid biosynthetic process"/>
    <property type="evidence" value="ECO:0007669"/>
    <property type="project" value="UniProtKB-UniRule"/>
</dbReference>
<dbReference type="GO" id="GO:0009245">
    <property type="term" value="P:lipid A biosynthetic process"/>
    <property type="evidence" value="ECO:0007669"/>
    <property type="project" value="UniProtKB-UniRule"/>
</dbReference>
<dbReference type="CDD" id="cd01288">
    <property type="entry name" value="FabZ"/>
    <property type="match status" value="1"/>
</dbReference>
<dbReference type="FunFam" id="3.10.129.10:FF:000001">
    <property type="entry name" value="3-hydroxyacyl-[acyl-carrier-protein] dehydratase FabZ"/>
    <property type="match status" value="1"/>
</dbReference>
<dbReference type="Gene3D" id="3.10.129.10">
    <property type="entry name" value="Hotdog Thioesterase"/>
    <property type="match status" value="1"/>
</dbReference>
<dbReference type="HAMAP" id="MF_00406">
    <property type="entry name" value="FabZ"/>
    <property type="match status" value="1"/>
</dbReference>
<dbReference type="InterPro" id="IPR013114">
    <property type="entry name" value="FabA_FabZ"/>
</dbReference>
<dbReference type="InterPro" id="IPR010084">
    <property type="entry name" value="FabZ"/>
</dbReference>
<dbReference type="InterPro" id="IPR029069">
    <property type="entry name" value="HotDog_dom_sf"/>
</dbReference>
<dbReference type="NCBIfam" id="TIGR01750">
    <property type="entry name" value="fabZ"/>
    <property type="match status" value="1"/>
</dbReference>
<dbReference type="NCBIfam" id="NF000582">
    <property type="entry name" value="PRK00006.1"/>
    <property type="match status" value="1"/>
</dbReference>
<dbReference type="PANTHER" id="PTHR30272">
    <property type="entry name" value="3-HYDROXYACYL-[ACYL-CARRIER-PROTEIN] DEHYDRATASE"/>
    <property type="match status" value="1"/>
</dbReference>
<dbReference type="PANTHER" id="PTHR30272:SF1">
    <property type="entry name" value="3-HYDROXYACYL-[ACYL-CARRIER-PROTEIN] DEHYDRATASE"/>
    <property type="match status" value="1"/>
</dbReference>
<dbReference type="Pfam" id="PF07977">
    <property type="entry name" value="FabA"/>
    <property type="match status" value="1"/>
</dbReference>
<dbReference type="SUPFAM" id="SSF54637">
    <property type="entry name" value="Thioesterase/thiol ester dehydrase-isomerase"/>
    <property type="match status" value="1"/>
</dbReference>
<reference key="1">
    <citation type="submission" date="2006-08" db="EMBL/GenBank/DDBJ databases">
        <title>Complete sequence of Shewanella frigidimarina NCIMB 400.</title>
        <authorList>
            <consortium name="US DOE Joint Genome Institute"/>
            <person name="Copeland A."/>
            <person name="Lucas S."/>
            <person name="Lapidus A."/>
            <person name="Barry K."/>
            <person name="Detter J.C."/>
            <person name="Glavina del Rio T."/>
            <person name="Hammon N."/>
            <person name="Israni S."/>
            <person name="Dalin E."/>
            <person name="Tice H."/>
            <person name="Pitluck S."/>
            <person name="Fredrickson J.K."/>
            <person name="Kolker E."/>
            <person name="McCuel L.A."/>
            <person name="DiChristina T."/>
            <person name="Nealson K.H."/>
            <person name="Newman D."/>
            <person name="Tiedje J.M."/>
            <person name="Zhou J."/>
            <person name="Romine M.F."/>
            <person name="Culley D.E."/>
            <person name="Serres M."/>
            <person name="Chertkov O."/>
            <person name="Brettin T."/>
            <person name="Bruce D."/>
            <person name="Han C."/>
            <person name="Tapia R."/>
            <person name="Gilna P."/>
            <person name="Schmutz J."/>
            <person name="Larimer F."/>
            <person name="Land M."/>
            <person name="Hauser L."/>
            <person name="Kyrpides N."/>
            <person name="Mikhailova N."/>
            <person name="Richardson P."/>
        </authorList>
    </citation>
    <scope>NUCLEOTIDE SEQUENCE [LARGE SCALE GENOMIC DNA]</scope>
    <source>
        <strain>NCIMB 400</strain>
    </source>
</reference>
<organism>
    <name type="scientific">Shewanella frigidimarina (strain NCIMB 400)</name>
    <dbReference type="NCBI Taxonomy" id="318167"/>
    <lineage>
        <taxon>Bacteria</taxon>
        <taxon>Pseudomonadati</taxon>
        <taxon>Pseudomonadota</taxon>
        <taxon>Gammaproteobacteria</taxon>
        <taxon>Alteromonadales</taxon>
        <taxon>Shewanellaceae</taxon>
        <taxon>Shewanella</taxon>
    </lineage>
</organism>
<keyword id="KW-0963">Cytoplasm</keyword>
<keyword id="KW-0441">Lipid A biosynthesis</keyword>
<keyword id="KW-0444">Lipid biosynthesis</keyword>
<keyword id="KW-0443">Lipid metabolism</keyword>
<keyword id="KW-0456">Lyase</keyword>
<keyword id="KW-1185">Reference proteome</keyword>
<proteinExistence type="inferred from homology"/>
<sequence length="153" mass="17413">MSNQLNTMDIKEILKYLPHRYPFLLIDRVLDFTVGEHLHAIKNVTINEPFFQGHFPIQPVMPGVLILEAMAQATGLLAFKTMSTEPSPEVLYYFAGIDKARFKRVVEPGDQIHFHVKMIKERRGIGVFVGEALVDGELVCSAEIMCARREIKK</sequence>
<name>FABZ_SHEFN</name>
<evidence type="ECO:0000255" key="1">
    <source>
        <dbReference type="HAMAP-Rule" id="MF_00406"/>
    </source>
</evidence>
<comment type="function">
    <text evidence="1">Involved in unsaturated fatty acids biosynthesis. Catalyzes the dehydration of short chain beta-hydroxyacyl-ACPs and long chain saturated and unsaturated beta-hydroxyacyl-ACPs.</text>
</comment>
<comment type="catalytic activity">
    <reaction evidence="1">
        <text>a (3R)-hydroxyacyl-[ACP] = a (2E)-enoyl-[ACP] + H2O</text>
        <dbReference type="Rhea" id="RHEA:13097"/>
        <dbReference type="Rhea" id="RHEA-COMP:9925"/>
        <dbReference type="Rhea" id="RHEA-COMP:9945"/>
        <dbReference type="ChEBI" id="CHEBI:15377"/>
        <dbReference type="ChEBI" id="CHEBI:78784"/>
        <dbReference type="ChEBI" id="CHEBI:78827"/>
        <dbReference type="EC" id="4.2.1.59"/>
    </reaction>
</comment>
<comment type="subcellular location">
    <subcellularLocation>
        <location evidence="1">Cytoplasm</location>
    </subcellularLocation>
</comment>
<comment type="similarity">
    <text evidence="1">Belongs to the thioester dehydratase family. FabZ subfamily.</text>
</comment>
<accession>Q085D1</accession>
<feature type="chain" id="PRO_0000301925" description="3-hydroxyacyl-[acyl-carrier-protein] dehydratase FabZ">
    <location>
        <begin position="1"/>
        <end position="153"/>
    </location>
</feature>
<feature type="active site" evidence="1">
    <location>
        <position position="54"/>
    </location>
</feature>
<gene>
    <name evidence="1" type="primary">fabZ</name>
    <name type="ordered locus">Sfri_1281</name>
</gene>
<protein>
    <recommendedName>
        <fullName evidence="1">3-hydroxyacyl-[acyl-carrier-protein] dehydratase FabZ</fullName>
        <ecNumber evidence="1">4.2.1.59</ecNumber>
    </recommendedName>
    <alternativeName>
        <fullName evidence="1">(3R)-hydroxymyristoyl-[acyl-carrier-protein] dehydratase</fullName>
        <shortName evidence="1">(3R)-hydroxymyristoyl-ACP dehydrase</shortName>
    </alternativeName>
    <alternativeName>
        <fullName evidence="1">Beta-hydroxyacyl-ACP dehydratase</fullName>
    </alternativeName>
</protein>